<organism>
    <name type="scientific">Streptomyces fradiae</name>
    <name type="common">Streptomyces roseoflavus</name>
    <dbReference type="NCBI Taxonomy" id="1906"/>
    <lineage>
        <taxon>Bacteria</taxon>
        <taxon>Bacillati</taxon>
        <taxon>Actinomycetota</taxon>
        <taxon>Actinomycetes</taxon>
        <taxon>Kitasatosporales</taxon>
        <taxon>Streptomycetaceae</taxon>
        <taxon>Streptomyces</taxon>
    </lineage>
</organism>
<gene>
    <name evidence="3" type="primary">fomD</name>
</gene>
<evidence type="ECO:0000250" key="1">
    <source>
        <dbReference type="UniProtKB" id="O83033"/>
    </source>
</evidence>
<evidence type="ECO:0000269" key="2">
    <source>
    </source>
</evidence>
<evidence type="ECO:0000303" key="3">
    <source>
    </source>
</evidence>
<evidence type="ECO:0000305" key="4"/>
<evidence type="ECO:0000305" key="5">
    <source>
    </source>
</evidence>
<evidence type="ECO:0007744" key="6">
    <source>
        <dbReference type="PDB" id="5ZDM"/>
    </source>
</evidence>
<evidence type="ECO:0007744" key="7">
    <source>
        <dbReference type="PDB" id="5ZDN"/>
    </source>
</evidence>
<evidence type="ECO:0007829" key="8">
    <source>
        <dbReference type="PDB" id="5ZDM"/>
    </source>
</evidence>
<feature type="chain" id="PRO_0000459579" description="Cytidylyl-2-hydroxypropylphosphonate hydrolase">
    <location>
        <begin position="1"/>
        <end position="207"/>
    </location>
</feature>
<feature type="active site" description="Proton donor" evidence="5">
    <location>
        <position position="142"/>
    </location>
</feature>
<feature type="binding site" evidence="2 7">
    <location>
        <position position="68"/>
    </location>
    <ligand>
        <name>CDP</name>
        <dbReference type="ChEBI" id="CHEBI:58069"/>
        <note>inhibitor</note>
    </ligand>
</feature>
<feature type="binding site" evidence="2 7">
    <location>
        <position position="74"/>
    </location>
    <ligand>
        <name>CDP</name>
        <dbReference type="ChEBI" id="CHEBI:58069"/>
        <note>inhibitor</note>
    </ligand>
</feature>
<feature type="binding site" evidence="2 7">
    <location>
        <position position="76"/>
    </location>
    <ligand>
        <name>CDP</name>
        <dbReference type="ChEBI" id="CHEBI:58069"/>
        <note>inhibitor</note>
    </ligand>
</feature>
<feature type="binding site" evidence="2 7">
    <location>
        <position position="77"/>
    </location>
    <ligand>
        <name>CDP</name>
        <dbReference type="ChEBI" id="CHEBI:58069"/>
        <note>inhibitor</note>
    </ligand>
</feature>
<feature type="binding site" evidence="2 6 7">
    <location>
        <position position="109"/>
    </location>
    <ligand>
        <name>a divalent metal cation</name>
        <dbReference type="ChEBI" id="CHEBI:60240"/>
        <label>1</label>
    </ligand>
</feature>
<feature type="binding site" evidence="2 6 7">
    <location>
        <position position="125"/>
    </location>
    <ligand>
        <name>a divalent metal cation</name>
        <dbReference type="ChEBI" id="CHEBI:60240"/>
        <label>1</label>
    </ligand>
</feature>
<feature type="binding site" evidence="2 6 7">
    <location>
        <position position="127"/>
    </location>
    <ligand>
        <name>a divalent metal cation</name>
        <dbReference type="ChEBI" id="CHEBI:60240"/>
        <label>2</label>
    </ligand>
</feature>
<feature type="binding site" evidence="2 6 7">
    <location>
        <position position="129"/>
    </location>
    <ligand>
        <name>a divalent metal cation</name>
        <dbReference type="ChEBI" id="CHEBI:60240"/>
        <label>1</label>
    </ligand>
</feature>
<feature type="binding site" evidence="2 6 7">
    <location>
        <position position="129"/>
    </location>
    <ligand>
        <name>a divalent metal cation</name>
        <dbReference type="ChEBI" id="CHEBI:60240"/>
        <label>2</label>
    </ligand>
</feature>
<feature type="binding site" evidence="2 7">
    <location>
        <position position="142"/>
    </location>
    <ligand>
        <name>CDP</name>
        <dbReference type="ChEBI" id="CHEBI:58069"/>
        <note>inhibitor</note>
    </ligand>
</feature>
<feature type="binding site" evidence="2 6 7">
    <location>
        <position position="143"/>
    </location>
    <ligand>
        <name>a divalent metal cation</name>
        <dbReference type="ChEBI" id="CHEBI:60240"/>
        <label>2</label>
    </ligand>
</feature>
<feature type="mutagenesis site" description="250-fold decrease in kcat with (S)-HPP-CMP as substrate. Does not affect the KM for (S)-HPP-CMP." evidence="2">
    <original>Y</original>
    <variation>F</variation>
    <location>
        <position position="107"/>
    </location>
</feature>
<feature type="mutagenesis site" description="10-fold increase in KM for (S)-HPP-CMP." evidence="2">
    <original>K</original>
    <variation>A</variation>
    <location>
        <position position="142"/>
    </location>
</feature>
<feature type="strand" evidence="8">
    <location>
        <begin position="17"/>
        <end position="24"/>
    </location>
</feature>
<feature type="strand" evidence="8">
    <location>
        <begin position="27"/>
        <end position="40"/>
    </location>
</feature>
<feature type="strand" evidence="8">
    <location>
        <begin position="43"/>
        <end position="48"/>
    </location>
</feature>
<feature type="helix" evidence="8">
    <location>
        <begin position="67"/>
        <end position="71"/>
    </location>
</feature>
<feature type="strand" evidence="8">
    <location>
        <begin position="80"/>
        <end position="84"/>
    </location>
</feature>
<feature type="strand" evidence="8">
    <location>
        <begin position="89"/>
        <end position="96"/>
    </location>
</feature>
<feature type="turn" evidence="8">
    <location>
        <begin position="98"/>
        <end position="100"/>
    </location>
</feature>
<feature type="strand" evidence="8">
    <location>
        <begin position="103"/>
        <end position="111"/>
    </location>
</feature>
<feature type="strand" evidence="8">
    <location>
        <begin position="115"/>
        <end position="117"/>
    </location>
</feature>
<feature type="strand" evidence="8">
    <location>
        <begin position="120"/>
        <end position="123"/>
    </location>
</feature>
<feature type="strand" evidence="8">
    <location>
        <begin position="125"/>
        <end position="133"/>
    </location>
</feature>
<feature type="strand" evidence="8">
    <location>
        <begin position="140"/>
        <end position="143"/>
    </location>
</feature>
<feature type="helix" evidence="8">
    <location>
        <begin position="144"/>
        <end position="152"/>
    </location>
</feature>
<feature type="helix" evidence="8">
    <location>
        <begin position="158"/>
        <end position="176"/>
    </location>
</feature>
<feature type="helix" evidence="8">
    <location>
        <begin position="184"/>
        <end position="188"/>
    </location>
</feature>
<proteinExistence type="evidence at protein level"/>
<keyword id="KW-0002">3D-structure</keyword>
<keyword id="KW-0045">Antibiotic biosynthesis</keyword>
<keyword id="KW-0170">Cobalt</keyword>
<keyword id="KW-0378">Hydrolase</keyword>
<keyword id="KW-0464">Manganese</keyword>
<keyword id="KW-0479">Metal-binding</keyword>
<accession>D2SNF7</accession>
<sequence length="207" mass="23593">MTEAASEGTESFAFGAVVERRDELDGRPWISYPVRVVADTPELVAVHLSHGTRLTFGDDPFSWGPHPWQLFGDRWQSAGILQLHRPGRGHSVWVLRDADTGAFREWYVNVEAPWRRTPTGFSTLDHEIDLVVPADSRTLRWKDVEKFEERARIGHFSPEEATAIRAEAADVAREIAAGEQWWDTRWSRWEPPAGWNALLQSFETEGS</sequence>
<reference key="1">
    <citation type="journal article" date="2006" name="Chem. Biol.">
        <title>Heterologous production of fosfomycin and identification of the minimal biosynthetic gene cluster.</title>
        <authorList>
            <person name="Woodyer R.D."/>
            <person name="Shao Z."/>
            <person name="Thomas P.M."/>
            <person name="Kelleher N.L."/>
            <person name="Blodgett J.A."/>
            <person name="Metcalf W.W."/>
            <person name="van der Donk W.A."/>
            <person name="Zhao H."/>
        </authorList>
    </citation>
    <scope>NUCLEOTIDE SEQUENCE [GENOMIC DNA]</scope>
    <source>
        <strain>HZ1738</strain>
    </source>
</reference>
<reference evidence="6 7" key="2">
    <citation type="journal article" date="2018" name="Biochemistry">
        <title>Biochemical and structural analysis of FomD that catalyzes the hydrolysis of cytidylyl (S)-2-hydroxypropylphosphonate in fosfomycin biosynthesis.</title>
        <authorList>
            <person name="Sato S."/>
            <person name="Miyanaga A."/>
            <person name="Kim S.Y."/>
            <person name="Kuzuyama T."/>
            <person name="Kudo F."/>
            <person name="Eguchi T."/>
        </authorList>
    </citation>
    <scope>X-RAY CRYSTALLOGRAPHY (1.38 ANGSTROMS) IN COMPLEXES WITH CALCIUM; MAGNESIUM AND CDP</scope>
    <scope>FUNCTION</scope>
    <scope>CATALYTIC ACTIVITY</scope>
    <scope>ACTIVITY REGULATION</scope>
    <scope>BIOPHYSICOCHEMICAL PROPERTIES</scope>
    <scope>PATHWAY</scope>
    <scope>DOMAIN</scope>
    <scope>ACTIVE SITE</scope>
    <scope>MUTAGENESIS OF TYR-107 AND LYS-142</scope>
</reference>
<protein>
    <recommendedName>
        <fullName evidence="4">Cytidylyl-2-hydroxypropylphosphonate hydrolase</fullName>
        <ecNumber evidence="2">3.6.1.-</ecNumber>
    </recommendedName>
</protein>
<comment type="function">
    <text evidence="2">Involved in fosfomycin biosynthesis (PubMed:30010320). Catalyzes the hydrolysis of cytidylyl (S)-2-hydroxypropylphosphonate ((S)-HPP-CMP) to give (S)-2-hydroxypropylphosphonate ((S)-HPP) and CMP (PubMed:30010320). Can also hydrolyze (R)-HPP-CMP and cytidylyl 2-hydroxyethylphosphonate (HEP-CMP), which is a biosynthetic intermediate before C-methylation, but the catalytic efficiency is much higher with (S)-HPP-CMP (PubMed:30010320).</text>
</comment>
<comment type="catalytic activity">
    <reaction evidence="2">
        <text>cytidine 5'-({hydroxy[(S)-2-hydroxypropyl]phosphonoyl}phosphate) + H2O = (S)-2-hydroxypropylphosphonate + CMP + H(+)</text>
        <dbReference type="Rhea" id="RHEA:77231"/>
        <dbReference type="ChEBI" id="CHEBI:15377"/>
        <dbReference type="ChEBI" id="CHEBI:15378"/>
        <dbReference type="ChEBI" id="CHEBI:60377"/>
        <dbReference type="ChEBI" id="CHEBI:62246"/>
        <dbReference type="ChEBI" id="CHEBI:142877"/>
    </reaction>
    <physiologicalReaction direction="left-to-right" evidence="2">
        <dbReference type="Rhea" id="RHEA:77232"/>
    </physiologicalReaction>
</comment>
<comment type="cofactor">
    <cofactor evidence="1">
        <name>Mn(2+)</name>
        <dbReference type="ChEBI" id="CHEBI:29035"/>
    </cofactor>
    <cofactor evidence="1">
        <name>Co(2+)</name>
        <dbReference type="ChEBI" id="CHEBI:48828"/>
    </cofactor>
</comment>
<comment type="activity regulation">
    <text evidence="2">Hydrolysis of (S)-HPP-CMP is inhibited by CDP.</text>
</comment>
<comment type="biophysicochemical properties">
    <kinetics>
        <KM evidence="2">9.4 uM for (S)-HPP-CMP</KM>
        <KM evidence="2">21 uM for (R)-HPP-CMP</KM>
        <KM evidence="2">68 uM for HEP-CMP</KM>
        <text evidence="2">kcat is 51 sec(-1) with (S)-HPP-CMP as substrate. kcat is 10.8 sec(-1) with (R)-HPP-CMP as substrate. kcat is 14 sec(-1) with HEP-CMP as substrate.</text>
    </kinetics>
</comment>
<comment type="pathway">
    <text evidence="2">Antibiotic biosynthesis; fosfomycin biosynthesis.</text>
</comment>
<comment type="domain">
    <text evidence="2">Comprises a large twisted antiparallel beta-sheet with two additional alpha-helices located at the C-terminus.</text>
</comment>
<comment type="similarity">
    <text evidence="4">Belongs to the FomD family.</text>
</comment>
<dbReference type="EC" id="3.6.1.-" evidence="2"/>
<dbReference type="EMBL" id="EU924263">
    <property type="protein sequence ID" value="ACG70828.1"/>
    <property type="molecule type" value="Genomic_DNA"/>
</dbReference>
<dbReference type="PDB" id="5ZDM">
    <property type="method" value="X-ray"/>
    <property type="resolution" value="1.38 A"/>
    <property type="chains" value="A=1-207"/>
</dbReference>
<dbReference type="PDB" id="5ZDN">
    <property type="method" value="X-ray"/>
    <property type="resolution" value="2.02 A"/>
    <property type="chains" value="A=1-207"/>
</dbReference>
<dbReference type="PDBsum" id="5ZDM"/>
<dbReference type="PDBsum" id="5ZDN"/>
<dbReference type="SMR" id="D2SNF7"/>
<dbReference type="UniPathway" id="UPA01071"/>
<dbReference type="GO" id="GO:0016787">
    <property type="term" value="F:hydrolase activity"/>
    <property type="evidence" value="ECO:0007669"/>
    <property type="project" value="UniProtKB-KW"/>
</dbReference>
<dbReference type="GO" id="GO:0046872">
    <property type="term" value="F:metal ion binding"/>
    <property type="evidence" value="ECO:0007669"/>
    <property type="project" value="UniProtKB-KW"/>
</dbReference>
<dbReference type="GO" id="GO:0017000">
    <property type="term" value="P:antibiotic biosynthetic process"/>
    <property type="evidence" value="ECO:0007669"/>
    <property type="project" value="UniProtKB-KW"/>
</dbReference>
<dbReference type="Gene3D" id="2.40.380.10">
    <property type="entry name" value="FomD-like"/>
    <property type="match status" value="1"/>
</dbReference>
<dbReference type="InterPro" id="IPR007295">
    <property type="entry name" value="DUF402"/>
</dbReference>
<dbReference type="InterPro" id="IPR035930">
    <property type="entry name" value="FomD-like_sf"/>
</dbReference>
<dbReference type="InterPro" id="IPR050212">
    <property type="entry name" value="Ntdp-like"/>
</dbReference>
<dbReference type="PANTHER" id="PTHR39159">
    <property type="match status" value="1"/>
</dbReference>
<dbReference type="PANTHER" id="PTHR39159:SF1">
    <property type="entry name" value="UPF0374 PROTEIN YGAC"/>
    <property type="match status" value="1"/>
</dbReference>
<dbReference type="Pfam" id="PF04167">
    <property type="entry name" value="DUF402"/>
    <property type="match status" value="1"/>
</dbReference>
<dbReference type="SUPFAM" id="SSF159234">
    <property type="entry name" value="FomD-like"/>
    <property type="match status" value="1"/>
</dbReference>
<name>FOMD_STRFR</name>